<dbReference type="EMBL" id="U00062">
    <property type="protein sequence ID" value="AAB68908.1"/>
    <property type="molecule type" value="Genomic_DNA"/>
</dbReference>
<dbReference type="EMBL" id="BK006934">
    <property type="protein sequence ID" value="DAA06727.1"/>
    <property type="molecule type" value="Genomic_DNA"/>
</dbReference>
<dbReference type="PIR" id="S46739">
    <property type="entry name" value="S46739"/>
</dbReference>
<dbReference type="RefSeq" id="NP_011901.1">
    <property type="nucleotide sequence ID" value="NM_001179166.1"/>
</dbReference>
<dbReference type="SMR" id="P38770"/>
<dbReference type="BioGRID" id="36467">
    <property type="interactions" value="842"/>
</dbReference>
<dbReference type="DIP" id="DIP-5580N"/>
<dbReference type="FunCoup" id="P38770">
    <property type="interactions" value="47"/>
</dbReference>
<dbReference type="IntAct" id="P38770">
    <property type="interactions" value="13"/>
</dbReference>
<dbReference type="MINT" id="P38770"/>
<dbReference type="STRING" id="4932.YHR036W"/>
<dbReference type="TCDB" id="9.A.34.1.1">
    <property type="family name" value="the nuclear pore complex biogenesis (npc-b) family"/>
</dbReference>
<dbReference type="iPTMnet" id="P38770"/>
<dbReference type="PaxDb" id="4932-YHR036W"/>
<dbReference type="PeptideAtlas" id="P38770"/>
<dbReference type="EnsemblFungi" id="YHR036W_mRNA">
    <property type="protein sequence ID" value="YHR036W"/>
    <property type="gene ID" value="YHR036W"/>
</dbReference>
<dbReference type="GeneID" id="856431"/>
<dbReference type="KEGG" id="sce:YHR036W"/>
<dbReference type="AGR" id="SGD:S000001078"/>
<dbReference type="SGD" id="S000001078">
    <property type="gene designation" value="BRL1"/>
</dbReference>
<dbReference type="VEuPathDB" id="FungiDB:YHR036W"/>
<dbReference type="eggNOG" id="KOG4503">
    <property type="taxonomic scope" value="Eukaryota"/>
</dbReference>
<dbReference type="HOGENOM" id="CLU_031411_1_0_1"/>
<dbReference type="InParanoid" id="P38770"/>
<dbReference type="OMA" id="ETHSSMT"/>
<dbReference type="OrthoDB" id="5961at2759"/>
<dbReference type="BioCyc" id="YEAST:G3O-31096-MONOMER"/>
<dbReference type="BioGRID-ORCS" id="856431">
    <property type="hits" value="2 hits in 10 CRISPR screens"/>
</dbReference>
<dbReference type="PRO" id="PR:P38770"/>
<dbReference type="Proteomes" id="UP000002311">
    <property type="component" value="Chromosome VIII"/>
</dbReference>
<dbReference type="RNAct" id="P38770">
    <property type="molecule type" value="protein"/>
</dbReference>
<dbReference type="GO" id="GO:0005783">
    <property type="term" value="C:endoplasmic reticulum"/>
    <property type="evidence" value="ECO:0000314"/>
    <property type="project" value="SGD"/>
</dbReference>
<dbReference type="GO" id="GO:0016020">
    <property type="term" value="C:membrane"/>
    <property type="evidence" value="ECO:0000314"/>
    <property type="project" value="SGD"/>
</dbReference>
<dbReference type="GO" id="GO:0005635">
    <property type="term" value="C:nuclear envelope"/>
    <property type="evidence" value="ECO:0000314"/>
    <property type="project" value="SGD"/>
</dbReference>
<dbReference type="GO" id="GO:0031965">
    <property type="term" value="C:nuclear membrane"/>
    <property type="evidence" value="ECO:0007669"/>
    <property type="project" value="UniProtKB-SubCell"/>
</dbReference>
<dbReference type="GO" id="GO:0055088">
    <property type="term" value="P:lipid homeostasis"/>
    <property type="evidence" value="ECO:0000315"/>
    <property type="project" value="SGD"/>
</dbReference>
<dbReference type="GO" id="GO:0051028">
    <property type="term" value="P:mRNA transport"/>
    <property type="evidence" value="ECO:0007669"/>
    <property type="project" value="UniProtKB-KW"/>
</dbReference>
<dbReference type="GO" id="GO:0006998">
    <property type="term" value="P:nuclear envelope organization"/>
    <property type="evidence" value="ECO:0000315"/>
    <property type="project" value="SGD"/>
</dbReference>
<dbReference type="GO" id="GO:0015031">
    <property type="term" value="P:protein transport"/>
    <property type="evidence" value="ECO:0007669"/>
    <property type="project" value="UniProtKB-KW"/>
</dbReference>
<dbReference type="InterPro" id="IPR040202">
    <property type="entry name" value="Brl1/Brr6"/>
</dbReference>
<dbReference type="InterPro" id="IPR018767">
    <property type="entry name" value="Brl1/Brr6_dom"/>
</dbReference>
<dbReference type="PANTHER" id="PTHR28136:SF1">
    <property type="entry name" value="NUCLEUS EXPORT PROTEIN BRL1"/>
    <property type="match status" value="1"/>
</dbReference>
<dbReference type="PANTHER" id="PTHR28136">
    <property type="entry name" value="NUCLEUS EXPORT PROTEIN BRR6"/>
    <property type="match status" value="1"/>
</dbReference>
<dbReference type="Pfam" id="PF10104">
    <property type="entry name" value="Brr6_like_C_C"/>
    <property type="match status" value="1"/>
</dbReference>
<dbReference type="SMART" id="SM01042">
    <property type="entry name" value="Brr6_like_C_C"/>
    <property type="match status" value="1"/>
</dbReference>
<feature type="chain" id="PRO_0000202892" description="Nucleus export protein BRL1">
    <location>
        <begin position="1"/>
        <end position="471"/>
    </location>
</feature>
<feature type="topological domain" description="Cytoplasmic" evidence="1">
    <location>
        <begin position="1"/>
        <end position="299"/>
    </location>
</feature>
<feature type="transmembrane region" description="Helical" evidence="1">
    <location>
        <begin position="300"/>
        <end position="320"/>
    </location>
</feature>
<feature type="topological domain" description="Perinuclear space" evidence="1">
    <location>
        <begin position="321"/>
        <end position="407"/>
    </location>
</feature>
<feature type="transmembrane region" description="Helical" evidence="1">
    <location>
        <begin position="408"/>
        <end position="428"/>
    </location>
</feature>
<feature type="topological domain" description="Cytoplasmic" evidence="1">
    <location>
        <begin position="429"/>
        <end position="471"/>
    </location>
</feature>
<feature type="region of interest" description="Disordered" evidence="2">
    <location>
        <begin position="66"/>
        <end position="135"/>
    </location>
</feature>
<feature type="region of interest" description="Disordered" evidence="2">
    <location>
        <begin position="167"/>
        <end position="192"/>
    </location>
</feature>
<feature type="region of interest" description="Disordered" evidence="2">
    <location>
        <begin position="444"/>
        <end position="471"/>
    </location>
</feature>
<feature type="compositionally biased region" description="Acidic residues" evidence="2">
    <location>
        <begin position="70"/>
        <end position="92"/>
    </location>
</feature>
<feature type="compositionally biased region" description="Basic and acidic residues" evidence="2">
    <location>
        <begin position="115"/>
        <end position="126"/>
    </location>
</feature>
<feature type="compositionally biased region" description="Polar residues" evidence="2">
    <location>
        <begin position="172"/>
        <end position="185"/>
    </location>
</feature>
<gene>
    <name type="primary">BRL1</name>
    <name type="ordered locus">YHR036W</name>
</gene>
<proteinExistence type="evidence at protein level"/>
<accession>P38770</accession>
<accession>D3DKY3</accession>
<sequence>MESFENLSIRDSFTSGMEHVDEELGGLSDLSISKQGPTLSPQLINRFMPHFPSSPSPLRNTLDFSAAKADEEEDDRMEIDEVDDTSFEEEYNNEPIETHTEATENAVVEEIEATPEERQKQEKNESQDQSVEEVENIVSPHRSTVIKALLSPTDLGVAAATKVEGVVPLPPSANQDDNESSNNNAEGEDIIRNEEVEDEIKSSLGNHKSSQYANAFDSEIIKRELRSRSKYQPIQVSFNTHNYFYSDKDGIKTYSLTKPNHNKIDEFYDQNEAFKLPKPWSPNSHPASRASYALMSYLQLFLNAITTVVIFSFILSFIIALQKDLKSTWEQRKHELQYESRICQEQYLTNRCNQTPGLPALGEQCAIWKQCMDRNNDIFFRARSTLSAKLFGDIINSFIDPLNWKTLFVIFCGVITWCFSSNFLLGFVRAKSYYGNGIKTYPLPSSPKSPTSEETHSSMTASGEDSHLLKQ</sequence>
<protein>
    <recommendedName>
        <fullName>Nucleus export protein BRL1</fullName>
    </recommendedName>
    <alternativeName>
        <fullName>BRR6-like protein 1</fullName>
    </alternativeName>
</protein>
<name>BRL1_YEAST</name>
<keyword id="KW-0472">Membrane</keyword>
<keyword id="KW-0509">mRNA transport</keyword>
<keyword id="KW-0539">Nucleus</keyword>
<keyword id="KW-0653">Protein transport</keyword>
<keyword id="KW-1185">Reference proteome</keyword>
<keyword id="KW-0812">Transmembrane</keyword>
<keyword id="KW-1133">Transmembrane helix</keyword>
<keyword id="KW-0813">Transport</keyword>
<organism>
    <name type="scientific">Saccharomyces cerevisiae (strain ATCC 204508 / S288c)</name>
    <name type="common">Baker's yeast</name>
    <dbReference type="NCBI Taxonomy" id="559292"/>
    <lineage>
        <taxon>Eukaryota</taxon>
        <taxon>Fungi</taxon>
        <taxon>Dikarya</taxon>
        <taxon>Ascomycota</taxon>
        <taxon>Saccharomycotina</taxon>
        <taxon>Saccharomycetes</taxon>
        <taxon>Saccharomycetales</taxon>
        <taxon>Saccharomycetaceae</taxon>
        <taxon>Saccharomyces</taxon>
    </lineage>
</organism>
<reference key="1">
    <citation type="journal article" date="1994" name="Science">
        <title>Complete nucleotide sequence of Saccharomyces cerevisiae chromosome VIII.</title>
        <authorList>
            <person name="Johnston M."/>
            <person name="Andrews S."/>
            <person name="Brinkman R."/>
            <person name="Cooper J."/>
            <person name="Ding H."/>
            <person name="Dover J."/>
            <person name="Du Z."/>
            <person name="Favello A."/>
            <person name="Fulton L."/>
            <person name="Gattung S."/>
            <person name="Geisel C."/>
            <person name="Kirsten J."/>
            <person name="Kucaba T."/>
            <person name="Hillier L.W."/>
            <person name="Jier M."/>
            <person name="Johnston L."/>
            <person name="Langston Y."/>
            <person name="Latreille P."/>
            <person name="Louis E.J."/>
            <person name="Macri C."/>
            <person name="Mardis E."/>
            <person name="Menezes S."/>
            <person name="Mouser L."/>
            <person name="Nhan M."/>
            <person name="Rifkin L."/>
            <person name="Riles L."/>
            <person name="St Peter H."/>
            <person name="Trevaskis E."/>
            <person name="Vaughan K."/>
            <person name="Vignati D."/>
            <person name="Wilcox L."/>
            <person name="Wohldman P."/>
            <person name="Waterston R."/>
            <person name="Wilson R."/>
            <person name="Vaudin M."/>
        </authorList>
    </citation>
    <scope>NUCLEOTIDE SEQUENCE [LARGE SCALE GENOMIC DNA]</scope>
    <source>
        <strain>ATCC 204508 / S288c</strain>
    </source>
</reference>
<reference key="2">
    <citation type="journal article" date="2014" name="G3 (Bethesda)">
        <title>The reference genome sequence of Saccharomyces cerevisiae: Then and now.</title>
        <authorList>
            <person name="Engel S.R."/>
            <person name="Dietrich F.S."/>
            <person name="Fisk D.G."/>
            <person name="Binkley G."/>
            <person name="Balakrishnan R."/>
            <person name="Costanzo M.C."/>
            <person name="Dwight S.S."/>
            <person name="Hitz B.C."/>
            <person name="Karra K."/>
            <person name="Nash R.S."/>
            <person name="Weng S."/>
            <person name="Wong E.D."/>
            <person name="Lloyd P."/>
            <person name="Skrzypek M.S."/>
            <person name="Miyasato S.R."/>
            <person name="Simison M."/>
            <person name="Cherry J.M."/>
        </authorList>
    </citation>
    <scope>GENOME REANNOTATION</scope>
    <source>
        <strain>ATCC 204508 / S288c</strain>
    </source>
</reference>
<reference key="3">
    <citation type="journal article" date="2003" name="Nature">
        <title>Global analysis of protein expression in yeast.</title>
        <authorList>
            <person name="Ghaemmaghami S."/>
            <person name="Huh W.-K."/>
            <person name="Bower K."/>
            <person name="Howson R.W."/>
            <person name="Belle A."/>
            <person name="Dephoure N."/>
            <person name="O'Shea E.K."/>
            <person name="Weissman J.S."/>
        </authorList>
    </citation>
    <scope>LEVEL OF PROTEIN EXPRESSION [LARGE SCALE ANALYSIS]</scope>
</reference>
<reference key="4">
    <citation type="journal article" date="2005" name="Traffic">
        <title>Brl1p - a novel nuclear envelope protein required for nuclear transport.</title>
        <authorList>
            <person name="Saitoh Y.-H."/>
            <person name="Ogawa K."/>
            <person name="Nishimoto T."/>
        </authorList>
    </citation>
    <scope>FUNCTION</scope>
    <scope>SUBCELLULAR LOCATION</scope>
    <scope>INTERACTION WITH BRR6</scope>
</reference>
<reference key="5">
    <citation type="journal article" date="2006" name="Proc. Natl. Acad. Sci. U.S.A.">
        <title>A global topology map of the Saccharomyces cerevisiae membrane proteome.</title>
        <authorList>
            <person name="Kim H."/>
            <person name="Melen K."/>
            <person name="Oesterberg M."/>
            <person name="von Heijne G."/>
        </authorList>
    </citation>
    <scope>TOPOLOGY [LARGE SCALE ANALYSIS]</scope>
    <source>
        <strain>ATCC 208353 / W303-1A</strain>
    </source>
</reference>
<reference key="6">
    <citation type="journal article" date="2012" name="Proc. Natl. Acad. Sci. U.S.A.">
        <title>N-terminal acetylome analyses and functional insights of the N-terminal acetyltransferase NatB.</title>
        <authorList>
            <person name="Van Damme P."/>
            <person name="Lasa M."/>
            <person name="Polevoda B."/>
            <person name="Gazquez C."/>
            <person name="Elosegui-Artola A."/>
            <person name="Kim D.S."/>
            <person name="De Juan-Pardo E."/>
            <person name="Demeyer K."/>
            <person name="Hole K."/>
            <person name="Larrea E."/>
            <person name="Timmerman E."/>
            <person name="Prieto J."/>
            <person name="Arnesen T."/>
            <person name="Sherman F."/>
            <person name="Gevaert K."/>
            <person name="Aldabe R."/>
        </authorList>
    </citation>
    <scope>IDENTIFICATION BY MASS SPECTROMETRY [LARGE SCALE ANALYSIS]</scope>
</reference>
<evidence type="ECO:0000255" key="1"/>
<evidence type="ECO:0000256" key="2">
    <source>
        <dbReference type="SAM" id="MobiDB-lite"/>
    </source>
</evidence>
<evidence type="ECO:0000269" key="3">
    <source>
    </source>
</evidence>
<evidence type="ECO:0000269" key="4">
    <source>
    </source>
</evidence>
<evidence type="ECO:0000305" key="5"/>
<comment type="function">
    <text evidence="4">Involved in mRNA and protein export from nucleus.</text>
</comment>
<comment type="subunit">
    <text evidence="4">Interacts with BRR6.</text>
</comment>
<comment type="subcellular location">
    <subcellularLocation>
        <location evidence="4">Nucleus membrane</location>
        <topology evidence="4">Multi-pass membrane protein</topology>
    </subcellularLocation>
</comment>
<comment type="miscellaneous">
    <text evidence="3">Present with 1280 molecules/cell in log phase SD medium.</text>
</comment>
<comment type="similarity">
    <text evidence="5">Belongs to the BRL1/BRR6 family.</text>
</comment>